<accession>Q4WDK5</accession>
<evidence type="ECO:0000250" key="1">
    <source>
        <dbReference type="UniProtKB" id="O13836"/>
    </source>
</evidence>
<evidence type="ECO:0000250" key="2">
    <source>
        <dbReference type="UniProtKB" id="O70348"/>
    </source>
</evidence>
<evidence type="ECO:0000250" key="3">
    <source>
        <dbReference type="UniProtKB" id="P53063"/>
    </source>
</evidence>
<evidence type="ECO:0000250" key="4">
    <source>
        <dbReference type="UniProtKB" id="Q06349"/>
    </source>
</evidence>
<evidence type="ECO:0000250" key="5">
    <source>
        <dbReference type="UniProtKB" id="Q5AAT0"/>
    </source>
</evidence>
<evidence type="ECO:0000305" key="6"/>
<comment type="function">
    <text evidence="1 2 4 5">Decapping enzyme for NAD-capped RNAs: specifically hydrolyzes the nicotinamide adenine dinucleotide (NAD) cap from a subset of RNAs by removing the entire NAD moiety from the 5'-end of an NAD-capped RNA (By similarity). The NAD-cap is present at the 5'-end of some RNAs and snoRNAs. In contrast to the canonical 5'-end N7 methylguanosine (m7G) cap, the NAD cap promotes mRNA decay (By similarity). Also acts as a non-canonical decapping enzyme that removes the entire cap structure of m7G capped or incompletely capped RNAs (By similarity). Has decapping activity toward incomplete 5'-end m7G cap mRNAs such as unmethylated 5'-end-capped RNA (cap0), while it has no activity toward 2'-O-ribose methylated m7G cap (cap1) (By similarity). Also possesses RNA 5'-pyrophosphohydrolase activity by hydrolyzing the 5'-end triphosphate to release pyrophosphates (By similarity). Stimulates exoribonuclease activity of Rat1, allowing it to degrade RNAs with stable secondary structure more effectively (By similarity).</text>
</comment>
<comment type="catalytic activity">
    <reaction evidence="1">
        <text>a 5'-end NAD(+)-phospho-ribonucleoside in mRNA + H2O = a 5'-end phospho-ribonucleoside in mRNA + NAD(+) + H(+)</text>
        <dbReference type="Rhea" id="RHEA:60880"/>
        <dbReference type="Rhea" id="RHEA-COMP:15692"/>
        <dbReference type="Rhea" id="RHEA-COMP:15698"/>
        <dbReference type="ChEBI" id="CHEBI:15377"/>
        <dbReference type="ChEBI" id="CHEBI:15378"/>
        <dbReference type="ChEBI" id="CHEBI:57540"/>
        <dbReference type="ChEBI" id="CHEBI:138282"/>
        <dbReference type="ChEBI" id="CHEBI:144029"/>
    </reaction>
    <physiologicalReaction direction="left-to-right" evidence="1">
        <dbReference type="Rhea" id="RHEA:60881"/>
    </physiologicalReaction>
</comment>
<comment type="catalytic activity">
    <reaction evidence="3">
        <text>a 5'-end (N(7)-methyl 5'-triphosphoguanosine)-ribonucleoside-ribonucleotide in mRNA + H2O = a (N(7)-methyl 5'-triphosphoguanosine)-nucleoside + a 5'-end phospho-ribonucleoside in mRNA + H(+)</text>
        <dbReference type="Rhea" id="RHEA:66928"/>
        <dbReference type="Rhea" id="RHEA-COMP:15692"/>
        <dbReference type="Rhea" id="RHEA-COMP:17313"/>
        <dbReference type="ChEBI" id="CHEBI:15377"/>
        <dbReference type="ChEBI" id="CHEBI:15378"/>
        <dbReference type="ChEBI" id="CHEBI:138282"/>
        <dbReference type="ChEBI" id="CHEBI:172876"/>
        <dbReference type="ChEBI" id="CHEBI:172877"/>
    </reaction>
    <physiologicalReaction direction="left-to-right" evidence="3">
        <dbReference type="Rhea" id="RHEA:66929"/>
    </physiologicalReaction>
</comment>
<comment type="catalytic activity">
    <reaction evidence="1">
        <text>a 5'-end triphospho-ribonucleoside in mRNA + H2O = a 5'-end phospho-ribonucleoside in mRNA + diphosphate + H(+)</text>
        <dbReference type="Rhea" id="RHEA:78683"/>
        <dbReference type="Rhea" id="RHEA-COMP:15692"/>
        <dbReference type="Rhea" id="RHEA-COMP:17164"/>
        <dbReference type="ChEBI" id="CHEBI:15377"/>
        <dbReference type="ChEBI" id="CHEBI:15378"/>
        <dbReference type="ChEBI" id="CHEBI:33019"/>
        <dbReference type="ChEBI" id="CHEBI:138282"/>
        <dbReference type="ChEBI" id="CHEBI:167618"/>
    </reaction>
    <physiologicalReaction direction="left-to-right" evidence="1">
        <dbReference type="Rhea" id="RHEA:78684"/>
    </physiologicalReaction>
</comment>
<comment type="cofactor">
    <cofactor evidence="5">
        <name>a divalent metal cation</name>
        <dbReference type="ChEBI" id="CHEBI:60240"/>
    </cofactor>
    <text evidence="5">Divalent metal cation.</text>
</comment>
<comment type="subunit">
    <text evidence="1">Interacts with rat1; the interaction is direct, stabilizes rat1 protein structure and stimulates its exoribonuclease activity (By similarity). The interaction also stimulates rai1 pyrophosphohydrolase activity, probably by recruiting it to mRNA substrates (By similarity).</text>
</comment>
<comment type="subcellular location">
    <subcellularLocation>
        <location evidence="3">Nucleus</location>
    </subcellularLocation>
</comment>
<comment type="similarity">
    <text evidence="6">Belongs to the DXO/Dom3Z family.</text>
</comment>
<reference key="1">
    <citation type="journal article" date="2005" name="Nature">
        <title>Genomic sequence of the pathogenic and allergenic filamentous fungus Aspergillus fumigatus.</title>
        <authorList>
            <person name="Nierman W.C."/>
            <person name="Pain A."/>
            <person name="Anderson M.J."/>
            <person name="Wortman J.R."/>
            <person name="Kim H.S."/>
            <person name="Arroyo J."/>
            <person name="Berriman M."/>
            <person name="Abe K."/>
            <person name="Archer D.B."/>
            <person name="Bermejo C."/>
            <person name="Bennett J.W."/>
            <person name="Bowyer P."/>
            <person name="Chen D."/>
            <person name="Collins M."/>
            <person name="Coulsen R."/>
            <person name="Davies R."/>
            <person name="Dyer P.S."/>
            <person name="Farman M.L."/>
            <person name="Fedorova N."/>
            <person name="Fedorova N.D."/>
            <person name="Feldblyum T.V."/>
            <person name="Fischer R."/>
            <person name="Fosker N."/>
            <person name="Fraser A."/>
            <person name="Garcia J.L."/>
            <person name="Garcia M.J."/>
            <person name="Goble A."/>
            <person name="Goldman G.H."/>
            <person name="Gomi K."/>
            <person name="Griffith-Jones S."/>
            <person name="Gwilliam R."/>
            <person name="Haas B.J."/>
            <person name="Haas H."/>
            <person name="Harris D.E."/>
            <person name="Horiuchi H."/>
            <person name="Huang J."/>
            <person name="Humphray S."/>
            <person name="Jimenez J."/>
            <person name="Keller N."/>
            <person name="Khouri H."/>
            <person name="Kitamoto K."/>
            <person name="Kobayashi T."/>
            <person name="Konzack S."/>
            <person name="Kulkarni R."/>
            <person name="Kumagai T."/>
            <person name="Lafton A."/>
            <person name="Latge J.-P."/>
            <person name="Li W."/>
            <person name="Lord A."/>
            <person name="Lu C."/>
            <person name="Majoros W.H."/>
            <person name="May G.S."/>
            <person name="Miller B.L."/>
            <person name="Mohamoud Y."/>
            <person name="Molina M."/>
            <person name="Monod M."/>
            <person name="Mouyna I."/>
            <person name="Mulligan S."/>
            <person name="Murphy L.D."/>
            <person name="O'Neil S."/>
            <person name="Paulsen I."/>
            <person name="Penalva M.A."/>
            <person name="Pertea M."/>
            <person name="Price C."/>
            <person name="Pritchard B.L."/>
            <person name="Quail M.A."/>
            <person name="Rabbinowitsch E."/>
            <person name="Rawlins N."/>
            <person name="Rajandream M.A."/>
            <person name="Reichard U."/>
            <person name="Renauld H."/>
            <person name="Robson G.D."/>
            <person name="Rodriguez de Cordoba S."/>
            <person name="Rodriguez-Pena J.M."/>
            <person name="Ronning C.M."/>
            <person name="Rutter S."/>
            <person name="Salzberg S.L."/>
            <person name="Sanchez M."/>
            <person name="Sanchez-Ferrero J.C."/>
            <person name="Saunders D."/>
            <person name="Seeger K."/>
            <person name="Squares R."/>
            <person name="Squares S."/>
            <person name="Takeuchi M."/>
            <person name="Tekaia F."/>
            <person name="Turner G."/>
            <person name="Vazquez de Aldana C.R."/>
            <person name="Weidman J."/>
            <person name="White O."/>
            <person name="Woodward J.R."/>
            <person name="Yu J.-H."/>
            <person name="Fraser C.M."/>
            <person name="Galagan J.E."/>
            <person name="Asai K."/>
            <person name="Machida M."/>
            <person name="Hall N."/>
            <person name="Barrell B.G."/>
            <person name="Denning D.W."/>
        </authorList>
    </citation>
    <scope>NUCLEOTIDE SEQUENCE [LARGE SCALE GENOMIC DNA]</scope>
    <source>
        <strain>ATCC MYA-4609 / CBS 101355 / FGSC A1100 / Af293</strain>
    </source>
</reference>
<dbReference type="EC" id="3.6.1.-" evidence="5 1"/>
<dbReference type="EMBL" id="AAHF01000012">
    <property type="protein sequence ID" value="EAL85533.1"/>
    <property type="molecule type" value="Genomic_DNA"/>
</dbReference>
<dbReference type="RefSeq" id="XP_747571.1">
    <property type="nucleotide sequence ID" value="XM_742478.1"/>
</dbReference>
<dbReference type="SMR" id="Q4WDK5"/>
<dbReference type="FunCoup" id="Q4WDK5">
    <property type="interactions" value="624"/>
</dbReference>
<dbReference type="STRING" id="330879.Q4WDK5"/>
<dbReference type="EnsemblFungi" id="EAL85533">
    <property type="protein sequence ID" value="EAL85533"/>
    <property type="gene ID" value="AFUA_6G05060"/>
</dbReference>
<dbReference type="GeneID" id="3505338"/>
<dbReference type="KEGG" id="afm:AFUA_6G05060"/>
<dbReference type="VEuPathDB" id="FungiDB:Afu6g05060"/>
<dbReference type="eggNOG" id="KOG1982">
    <property type="taxonomic scope" value="Eukaryota"/>
</dbReference>
<dbReference type="HOGENOM" id="CLU_024877_4_1_1"/>
<dbReference type="InParanoid" id="Q4WDK5"/>
<dbReference type="OMA" id="VVTWRGH"/>
<dbReference type="OrthoDB" id="5853397at2759"/>
<dbReference type="Proteomes" id="UP000002530">
    <property type="component" value="Chromosome 6"/>
</dbReference>
<dbReference type="GO" id="GO:0005829">
    <property type="term" value="C:cytosol"/>
    <property type="evidence" value="ECO:0000318"/>
    <property type="project" value="GO_Central"/>
</dbReference>
<dbReference type="GO" id="GO:0090730">
    <property type="term" value="C:Las1 complex"/>
    <property type="evidence" value="ECO:0007669"/>
    <property type="project" value="EnsemblFungi"/>
</dbReference>
<dbReference type="GO" id="GO:0005634">
    <property type="term" value="C:nucleus"/>
    <property type="evidence" value="ECO:0000318"/>
    <property type="project" value="GO_Central"/>
</dbReference>
<dbReference type="GO" id="GO:0110103">
    <property type="term" value="C:RNA polymerase II termination complex"/>
    <property type="evidence" value="ECO:0007669"/>
    <property type="project" value="EnsemblFungi"/>
</dbReference>
<dbReference type="GO" id="GO:0140432">
    <property type="term" value="F:5'-hydroxyl dinucleotide hydrolase activity"/>
    <property type="evidence" value="ECO:0007669"/>
    <property type="project" value="EnsemblFungi"/>
</dbReference>
<dbReference type="GO" id="GO:0030234">
    <property type="term" value="F:enzyme regulator activity"/>
    <property type="evidence" value="ECO:0007669"/>
    <property type="project" value="EnsemblFungi"/>
</dbReference>
<dbReference type="GO" id="GO:0019003">
    <property type="term" value="F:GDP binding"/>
    <property type="evidence" value="ECO:0007669"/>
    <property type="project" value="EnsemblFungi"/>
</dbReference>
<dbReference type="GO" id="GO:0046872">
    <property type="term" value="F:metal ion binding"/>
    <property type="evidence" value="ECO:0007669"/>
    <property type="project" value="UniProtKB-KW"/>
</dbReference>
<dbReference type="GO" id="GO:0034353">
    <property type="term" value="F:mRNA 5'-diphosphatase activity"/>
    <property type="evidence" value="ECO:0000318"/>
    <property type="project" value="GO_Central"/>
</dbReference>
<dbReference type="GO" id="GO:1990174">
    <property type="term" value="F:phosphodiesterase decapping endonuclease activity"/>
    <property type="evidence" value="ECO:0007669"/>
    <property type="project" value="EnsemblFungi"/>
</dbReference>
<dbReference type="GO" id="GO:0003723">
    <property type="term" value="F:RNA binding"/>
    <property type="evidence" value="ECO:0007669"/>
    <property type="project" value="UniProtKB-KW"/>
</dbReference>
<dbReference type="GO" id="GO:0110152">
    <property type="term" value="F:RNA NAD+-cap (NAD+-forming) hydrolase activity"/>
    <property type="evidence" value="ECO:0007669"/>
    <property type="project" value="EnsemblFungi"/>
</dbReference>
<dbReference type="GO" id="GO:0000448">
    <property type="term" value="P:cleavage in ITS2 between 5.8S rRNA and LSU-rRNA of tricistronic rRNA transcript (SSU-rRNA, 5.8S rRNA, LSU-rRNA)"/>
    <property type="evidence" value="ECO:0007669"/>
    <property type="project" value="EnsemblFungi"/>
</dbReference>
<dbReference type="GO" id="GO:0031087">
    <property type="term" value="P:deadenylation-independent decapping of nuclear-transcribed mRNA"/>
    <property type="evidence" value="ECO:0007669"/>
    <property type="project" value="EnsemblFungi"/>
</dbReference>
<dbReference type="GO" id="GO:0006397">
    <property type="term" value="P:mRNA processing"/>
    <property type="evidence" value="ECO:0007669"/>
    <property type="project" value="UniProtKB-KW"/>
</dbReference>
<dbReference type="GO" id="GO:0110155">
    <property type="term" value="P:NAD-cap decapping"/>
    <property type="evidence" value="ECO:0000318"/>
    <property type="project" value="GO_Central"/>
</dbReference>
<dbReference type="GO" id="GO:0071035">
    <property type="term" value="P:nuclear polyadenylation-dependent rRNA catabolic process"/>
    <property type="evidence" value="ECO:0007669"/>
    <property type="project" value="EnsemblFungi"/>
</dbReference>
<dbReference type="GO" id="GO:0000956">
    <property type="term" value="P:nuclear-transcribed mRNA catabolic process"/>
    <property type="evidence" value="ECO:0000318"/>
    <property type="project" value="GO_Central"/>
</dbReference>
<dbReference type="GO" id="GO:1904595">
    <property type="term" value="P:positive regulation of termination of RNA polymerase II transcription"/>
    <property type="evidence" value="ECO:0007669"/>
    <property type="project" value="EnsemblFungi"/>
</dbReference>
<dbReference type="GO" id="GO:0030846">
    <property type="term" value="P:termination of RNA polymerase II transcription, poly(A)-coupled"/>
    <property type="evidence" value="ECO:0007669"/>
    <property type="project" value="EnsemblFungi"/>
</dbReference>
<dbReference type="InterPro" id="IPR013961">
    <property type="entry name" value="RAI1"/>
</dbReference>
<dbReference type="InterPro" id="IPR039039">
    <property type="entry name" value="RAI1-like_fam"/>
</dbReference>
<dbReference type="PANTHER" id="PTHR12395:SF9">
    <property type="entry name" value="DECAPPING AND EXORIBONUCLEASE PROTEIN"/>
    <property type="match status" value="1"/>
</dbReference>
<dbReference type="PANTHER" id="PTHR12395">
    <property type="entry name" value="DOM-3 RELATED"/>
    <property type="match status" value="1"/>
</dbReference>
<dbReference type="Pfam" id="PF08652">
    <property type="entry name" value="RAI1"/>
    <property type="match status" value="1"/>
</dbReference>
<feature type="chain" id="PRO_0000249827" description="Decapping nuclease RAI1">
    <location>
        <begin position="1"/>
        <end position="365"/>
    </location>
</feature>
<feature type="binding site" evidence="1">
    <location>
        <position position="165"/>
    </location>
    <ligand>
        <name>a divalent metal cation</name>
        <dbReference type="ChEBI" id="CHEBI:60240"/>
    </ligand>
</feature>
<feature type="binding site" evidence="2">
    <location>
        <position position="197"/>
    </location>
    <ligand>
        <name>substrate</name>
    </ligand>
</feature>
<feature type="binding site" evidence="2">
    <location>
        <position position="214"/>
    </location>
    <ligand>
        <name>substrate</name>
    </ligand>
</feature>
<feature type="binding site" evidence="1">
    <location>
        <position position="216"/>
    </location>
    <ligand>
        <name>a divalent metal cation</name>
        <dbReference type="ChEBI" id="CHEBI:60240"/>
    </ligand>
</feature>
<feature type="binding site" evidence="1">
    <location>
        <position position="234"/>
    </location>
    <ligand>
        <name>a divalent metal cation</name>
        <dbReference type="ChEBI" id="CHEBI:60240"/>
    </ligand>
</feature>
<feature type="binding site" evidence="1">
    <location>
        <position position="235"/>
    </location>
    <ligand>
        <name>a divalent metal cation</name>
        <dbReference type="ChEBI" id="CHEBI:60240"/>
    </ligand>
</feature>
<feature type="binding site" evidence="2">
    <location>
        <position position="236"/>
    </location>
    <ligand>
        <name>substrate</name>
    </ligand>
</feature>
<feature type="binding site" evidence="2">
    <location>
        <position position="260"/>
    </location>
    <ligand>
        <name>substrate</name>
    </ligand>
</feature>
<gene>
    <name type="primary">rai1</name>
    <name type="ORF">AFUA_6G05060</name>
</gene>
<sequence>MDGGTFDIQPIGRFYGSNTTIRRPREITCFSYDAEHKFHLGDSSLRYYYTPRLPADLNRGFDTFQKLDDTADEHLDALLETIMALEKETGKRCEADIITWRGMMTKILTAPFDNLNGFEMNATCFQVGGENNLYKIQQKQIQENQRMPPGMASQDLMAYWGYKFETLCLLQQPWDPTPRAEIESREDLVVNNNAQYCSVVRTGIGSTRLIIGGEVDAVWDCKPDRKEDPINWVELKTSAEIRNDRDMIKYERKLLKFWAQSFLLGVPKIIVGFRDNHGIVHRLEELETASIPNKVKKLGRGTWDGNICINFAAAFLEWLKSTIKEGGTWRIRKLEKSSLIQVFKIEETGTGDIISRSFLDWRSRS</sequence>
<name>DXO_ASPFU</name>
<proteinExistence type="inferred from homology"/>
<organism>
    <name type="scientific">Aspergillus fumigatus (strain ATCC MYA-4609 / CBS 101355 / FGSC A1100 / Af293)</name>
    <name type="common">Neosartorya fumigata</name>
    <dbReference type="NCBI Taxonomy" id="330879"/>
    <lineage>
        <taxon>Eukaryota</taxon>
        <taxon>Fungi</taxon>
        <taxon>Dikarya</taxon>
        <taxon>Ascomycota</taxon>
        <taxon>Pezizomycotina</taxon>
        <taxon>Eurotiomycetes</taxon>
        <taxon>Eurotiomycetidae</taxon>
        <taxon>Eurotiales</taxon>
        <taxon>Aspergillaceae</taxon>
        <taxon>Aspergillus</taxon>
        <taxon>Aspergillus subgen. Fumigati</taxon>
    </lineage>
</organism>
<protein>
    <recommendedName>
        <fullName evidence="6">Decapping nuclease RAI1</fullName>
        <ecNumber evidence="5">3.6.1.-</ecNumber>
    </recommendedName>
    <alternativeName>
        <fullName evidence="6">NAD-capped RNA hydrolase rai1</fullName>
        <shortName evidence="6">DeNADding enzyme rai1</shortName>
        <ecNumber evidence="1">3.6.1.-</ecNumber>
    </alternativeName>
</protein>
<keyword id="KW-0378">Hydrolase</keyword>
<keyword id="KW-0479">Metal-binding</keyword>
<keyword id="KW-0507">mRNA processing</keyword>
<keyword id="KW-0540">Nuclease</keyword>
<keyword id="KW-0547">Nucleotide-binding</keyword>
<keyword id="KW-0539">Nucleus</keyword>
<keyword id="KW-1185">Reference proteome</keyword>
<keyword id="KW-0694">RNA-binding</keyword>